<accession>Q9M3M0</accession>
<feature type="chain" id="PRO_0000118755" description="NAD(P)H-quinone oxidoreductase subunit K, chloroplastic">
    <location>
        <begin position="1"/>
        <end position="227"/>
    </location>
</feature>
<feature type="binding site" evidence="1">
    <location>
        <position position="43"/>
    </location>
    <ligand>
        <name>[4Fe-4S] cluster</name>
        <dbReference type="ChEBI" id="CHEBI:49883"/>
    </ligand>
</feature>
<feature type="binding site" evidence="1">
    <location>
        <position position="44"/>
    </location>
    <ligand>
        <name>[4Fe-4S] cluster</name>
        <dbReference type="ChEBI" id="CHEBI:49883"/>
    </ligand>
</feature>
<feature type="binding site" evidence="1">
    <location>
        <position position="108"/>
    </location>
    <ligand>
        <name>[4Fe-4S] cluster</name>
        <dbReference type="ChEBI" id="CHEBI:49883"/>
    </ligand>
</feature>
<feature type="binding site" evidence="1">
    <location>
        <position position="139"/>
    </location>
    <ligand>
        <name>[4Fe-4S] cluster</name>
        <dbReference type="ChEBI" id="CHEBI:49883"/>
    </ligand>
</feature>
<name>NDHK_SPIOL</name>
<comment type="function">
    <text evidence="1">NDH shuttles electrons from NAD(P)H:plastoquinone, via FMN and iron-sulfur (Fe-S) centers, to quinones in the photosynthetic chain and possibly in a chloroplast respiratory chain. The immediate electron acceptor for the enzyme in this species is believed to be plastoquinone. Couples the redox reaction to proton translocation, and thus conserves the redox energy in a proton gradient.</text>
</comment>
<comment type="catalytic activity">
    <reaction evidence="1">
        <text>a plastoquinone + NADH + (n+1) H(+)(in) = a plastoquinol + NAD(+) + n H(+)(out)</text>
        <dbReference type="Rhea" id="RHEA:42608"/>
        <dbReference type="Rhea" id="RHEA-COMP:9561"/>
        <dbReference type="Rhea" id="RHEA-COMP:9562"/>
        <dbReference type="ChEBI" id="CHEBI:15378"/>
        <dbReference type="ChEBI" id="CHEBI:17757"/>
        <dbReference type="ChEBI" id="CHEBI:57540"/>
        <dbReference type="ChEBI" id="CHEBI:57945"/>
        <dbReference type="ChEBI" id="CHEBI:62192"/>
    </reaction>
</comment>
<comment type="catalytic activity">
    <reaction evidence="1">
        <text>a plastoquinone + NADPH + (n+1) H(+)(in) = a plastoquinol + NADP(+) + n H(+)(out)</text>
        <dbReference type="Rhea" id="RHEA:42612"/>
        <dbReference type="Rhea" id="RHEA-COMP:9561"/>
        <dbReference type="Rhea" id="RHEA-COMP:9562"/>
        <dbReference type="ChEBI" id="CHEBI:15378"/>
        <dbReference type="ChEBI" id="CHEBI:17757"/>
        <dbReference type="ChEBI" id="CHEBI:57783"/>
        <dbReference type="ChEBI" id="CHEBI:58349"/>
        <dbReference type="ChEBI" id="CHEBI:62192"/>
    </reaction>
</comment>
<comment type="cofactor">
    <cofactor evidence="1">
        <name>[4Fe-4S] cluster</name>
        <dbReference type="ChEBI" id="CHEBI:49883"/>
    </cofactor>
    <text evidence="1">Binds 1 [4Fe-4S] cluster.</text>
</comment>
<comment type="subunit">
    <text evidence="1">NDH is composed of at least 16 different subunits, 5 of which are encoded in the nucleus.</text>
</comment>
<comment type="subcellular location">
    <subcellularLocation>
        <location evidence="1">Plastid</location>
        <location evidence="1">Chloroplast thylakoid membrane</location>
        <topology evidence="1">Peripheral membrane protein</topology>
        <orientation evidence="1">Stromal side</orientation>
    </subcellularLocation>
</comment>
<comment type="similarity">
    <text evidence="1">Belongs to the complex I 20 kDa subunit family.</text>
</comment>
<comment type="sequence caution" evidence="2">
    <conflict type="erroneous initiation">
        <sequence resource="EMBL-CDS" id="CAB88733"/>
    </conflict>
</comment>
<reference key="1">
    <citation type="journal article" date="2001" name="Plant Mol. Biol.">
        <title>The plastid chromosome of spinach (Spinacia oleracea): complete nucleotide sequence and gene organization.</title>
        <authorList>
            <person name="Schmitz-Linneweber C."/>
            <person name="Maier R.M."/>
            <person name="Alcaraz J.-P."/>
            <person name="Cottet A."/>
            <person name="Herrmann R.G."/>
            <person name="Mache R."/>
        </authorList>
    </citation>
    <scope>NUCLEOTIDE SEQUENCE [LARGE SCALE GENOMIC DNA]</scope>
    <source>
        <strain>cv. Geant d'hiver</strain>
        <strain>cv. Monatol</strain>
    </source>
</reference>
<keyword id="KW-0002">3D-structure</keyword>
<keyword id="KW-0004">4Fe-4S</keyword>
<keyword id="KW-0150">Chloroplast</keyword>
<keyword id="KW-0408">Iron</keyword>
<keyword id="KW-0411">Iron-sulfur</keyword>
<keyword id="KW-0472">Membrane</keyword>
<keyword id="KW-0479">Metal-binding</keyword>
<keyword id="KW-0520">NAD</keyword>
<keyword id="KW-0521">NADP</keyword>
<keyword id="KW-0934">Plastid</keyword>
<keyword id="KW-0618">Plastoquinone</keyword>
<keyword id="KW-0874">Quinone</keyword>
<keyword id="KW-1185">Reference proteome</keyword>
<keyword id="KW-0793">Thylakoid</keyword>
<keyword id="KW-1278">Translocase</keyword>
<keyword id="KW-0813">Transport</keyword>
<gene>
    <name evidence="1" type="primary">ndhK</name>
</gene>
<geneLocation type="chloroplast"/>
<sequence length="227" mass="25557">MNSIEFPLLDQIAQNSVISTTSNDLSNWSRLSSLWPLLYGTSCCFIEFASLIGSRFDFDRYGLVPRASPRQADLILTAGTVTMKMAPSLLRLYEQMPEPKYVIAMGACTITGGMFSTDSYSTVRGVDKLIPVDVYLPGCPPKPEAVIDAITKLRKKISREIYEDRIKSQPKNRCFTINHKFRVGRSIHTGNYDQALLYKYKSPSTSEIPPETFFKYKNAASSRELVN</sequence>
<proteinExistence type="evidence at protein level"/>
<organism>
    <name type="scientific">Spinacia oleracea</name>
    <name type="common">Spinach</name>
    <dbReference type="NCBI Taxonomy" id="3562"/>
    <lineage>
        <taxon>Eukaryota</taxon>
        <taxon>Viridiplantae</taxon>
        <taxon>Streptophyta</taxon>
        <taxon>Embryophyta</taxon>
        <taxon>Tracheophyta</taxon>
        <taxon>Spermatophyta</taxon>
        <taxon>Magnoliopsida</taxon>
        <taxon>eudicotyledons</taxon>
        <taxon>Gunneridae</taxon>
        <taxon>Pentapetalae</taxon>
        <taxon>Caryophyllales</taxon>
        <taxon>Chenopodiaceae</taxon>
        <taxon>Chenopodioideae</taxon>
        <taxon>Anserineae</taxon>
        <taxon>Spinacia</taxon>
    </lineage>
</organism>
<evidence type="ECO:0000255" key="1">
    <source>
        <dbReference type="HAMAP-Rule" id="MF_01356"/>
    </source>
</evidence>
<evidence type="ECO:0000305" key="2"/>
<protein>
    <recommendedName>
        <fullName evidence="1">NAD(P)H-quinone oxidoreductase subunit K, chloroplastic</fullName>
        <ecNumber evidence="1">7.1.1.-</ecNumber>
    </recommendedName>
    <alternativeName>
        <fullName evidence="1">NAD(P)H dehydrogenase subunit K</fullName>
    </alternativeName>
    <alternativeName>
        <fullName evidence="1">NADH-plastoquinone oxidoreductase subunit K</fullName>
    </alternativeName>
</protein>
<dbReference type="EC" id="7.1.1.-" evidence="1"/>
<dbReference type="EMBL" id="AJ400848">
    <property type="protein sequence ID" value="CAB88733.1"/>
    <property type="status" value="ALT_INIT"/>
    <property type="molecule type" value="Genomic_DNA"/>
</dbReference>
<dbReference type="RefSeq" id="NP_054940.3">
    <property type="nucleotide sequence ID" value="NC_002202.1"/>
</dbReference>
<dbReference type="PDB" id="9GRX">
    <property type="method" value="EM"/>
    <property type="resolution" value="3.19 A"/>
    <property type="chains" value="K=1-202"/>
</dbReference>
<dbReference type="PDBsum" id="9GRX"/>
<dbReference type="EMDB" id="EMD-51527"/>
<dbReference type="SMR" id="Q9M3M0"/>
<dbReference type="FunCoup" id="Q9M3M0">
    <property type="interactions" value="42"/>
</dbReference>
<dbReference type="STRING" id="3562.Q9M3M0"/>
<dbReference type="GeneID" id="2715596"/>
<dbReference type="KEGG" id="soe:2715596"/>
<dbReference type="InParanoid" id="Q9M3M0"/>
<dbReference type="OrthoDB" id="1889813at2759"/>
<dbReference type="Proteomes" id="UP001155700">
    <property type="component" value="Chloroplast Pltd"/>
</dbReference>
<dbReference type="GO" id="GO:0009535">
    <property type="term" value="C:chloroplast thylakoid membrane"/>
    <property type="evidence" value="ECO:0007669"/>
    <property type="project" value="UniProtKB-SubCell"/>
</dbReference>
<dbReference type="GO" id="GO:0045271">
    <property type="term" value="C:respiratory chain complex I"/>
    <property type="evidence" value="ECO:0000318"/>
    <property type="project" value="GO_Central"/>
</dbReference>
<dbReference type="GO" id="GO:0051539">
    <property type="term" value="F:4 iron, 4 sulfur cluster binding"/>
    <property type="evidence" value="ECO:0007669"/>
    <property type="project" value="UniProtKB-KW"/>
</dbReference>
<dbReference type="GO" id="GO:0005506">
    <property type="term" value="F:iron ion binding"/>
    <property type="evidence" value="ECO:0007669"/>
    <property type="project" value="UniProtKB-UniRule"/>
</dbReference>
<dbReference type="GO" id="GO:0008137">
    <property type="term" value="F:NADH dehydrogenase (ubiquinone) activity"/>
    <property type="evidence" value="ECO:0000318"/>
    <property type="project" value="GO_Central"/>
</dbReference>
<dbReference type="GO" id="GO:0048038">
    <property type="term" value="F:quinone binding"/>
    <property type="evidence" value="ECO:0007669"/>
    <property type="project" value="UniProtKB-KW"/>
</dbReference>
<dbReference type="GO" id="GO:0009060">
    <property type="term" value="P:aerobic respiration"/>
    <property type="evidence" value="ECO:0000318"/>
    <property type="project" value="GO_Central"/>
</dbReference>
<dbReference type="GO" id="GO:0015990">
    <property type="term" value="P:electron transport coupled proton transport"/>
    <property type="evidence" value="ECO:0000318"/>
    <property type="project" value="GO_Central"/>
</dbReference>
<dbReference type="GO" id="GO:0019684">
    <property type="term" value="P:photosynthesis, light reaction"/>
    <property type="evidence" value="ECO:0007669"/>
    <property type="project" value="UniProtKB-UniRule"/>
</dbReference>
<dbReference type="FunFam" id="3.40.50.12280:FF:000003">
    <property type="entry name" value="NAD(P)H-quinone oxidoreductase subunit K, chloroplastic"/>
    <property type="match status" value="1"/>
</dbReference>
<dbReference type="Gene3D" id="3.40.50.12280">
    <property type="match status" value="1"/>
</dbReference>
<dbReference type="HAMAP" id="MF_01356">
    <property type="entry name" value="NDH1_NuoB"/>
    <property type="match status" value="1"/>
</dbReference>
<dbReference type="InterPro" id="IPR006137">
    <property type="entry name" value="NADH_UbQ_OxRdtase-like_20kDa"/>
</dbReference>
<dbReference type="InterPro" id="IPR006138">
    <property type="entry name" value="NADH_UQ_OxRdtase_20Kd_su"/>
</dbReference>
<dbReference type="NCBIfam" id="TIGR01957">
    <property type="entry name" value="nuoB_fam"/>
    <property type="match status" value="1"/>
</dbReference>
<dbReference type="NCBIfam" id="NF005012">
    <property type="entry name" value="PRK06411.1"/>
    <property type="match status" value="1"/>
</dbReference>
<dbReference type="PANTHER" id="PTHR11995">
    <property type="entry name" value="NADH DEHYDROGENASE"/>
    <property type="match status" value="1"/>
</dbReference>
<dbReference type="PANTHER" id="PTHR11995:SF14">
    <property type="entry name" value="NADH DEHYDROGENASE [UBIQUINONE] IRON-SULFUR PROTEIN 7, MITOCHONDRIAL"/>
    <property type="match status" value="1"/>
</dbReference>
<dbReference type="Pfam" id="PF01058">
    <property type="entry name" value="Oxidored_q6"/>
    <property type="match status" value="1"/>
</dbReference>
<dbReference type="SUPFAM" id="SSF56770">
    <property type="entry name" value="HydA/Nqo6-like"/>
    <property type="match status" value="1"/>
</dbReference>
<dbReference type="PROSITE" id="PS01150">
    <property type="entry name" value="COMPLEX1_20K"/>
    <property type="match status" value="1"/>
</dbReference>